<dbReference type="EMBL" id="CP001154">
    <property type="protein sequence ID" value="ACO73724.1"/>
    <property type="molecule type" value="Genomic_DNA"/>
</dbReference>
<dbReference type="RefSeq" id="WP_012696216.1">
    <property type="nucleotide sequence ID" value="NC_012559.1"/>
</dbReference>
<dbReference type="SMR" id="C1D4D0"/>
<dbReference type="STRING" id="557598.LHK_00731"/>
<dbReference type="KEGG" id="lhk:LHK_00731"/>
<dbReference type="eggNOG" id="COG1327">
    <property type="taxonomic scope" value="Bacteria"/>
</dbReference>
<dbReference type="HOGENOM" id="CLU_108412_0_0_4"/>
<dbReference type="Proteomes" id="UP000002010">
    <property type="component" value="Chromosome"/>
</dbReference>
<dbReference type="GO" id="GO:0005524">
    <property type="term" value="F:ATP binding"/>
    <property type="evidence" value="ECO:0007669"/>
    <property type="project" value="UniProtKB-KW"/>
</dbReference>
<dbReference type="GO" id="GO:0003677">
    <property type="term" value="F:DNA binding"/>
    <property type="evidence" value="ECO:0007669"/>
    <property type="project" value="UniProtKB-KW"/>
</dbReference>
<dbReference type="GO" id="GO:0008270">
    <property type="term" value="F:zinc ion binding"/>
    <property type="evidence" value="ECO:0007669"/>
    <property type="project" value="UniProtKB-UniRule"/>
</dbReference>
<dbReference type="GO" id="GO:0045892">
    <property type="term" value="P:negative regulation of DNA-templated transcription"/>
    <property type="evidence" value="ECO:0007669"/>
    <property type="project" value="UniProtKB-UniRule"/>
</dbReference>
<dbReference type="HAMAP" id="MF_00440">
    <property type="entry name" value="NrdR"/>
    <property type="match status" value="1"/>
</dbReference>
<dbReference type="InterPro" id="IPR005144">
    <property type="entry name" value="ATP-cone_dom"/>
</dbReference>
<dbReference type="InterPro" id="IPR055173">
    <property type="entry name" value="NrdR-like_N"/>
</dbReference>
<dbReference type="InterPro" id="IPR003796">
    <property type="entry name" value="RNR_NrdR-like"/>
</dbReference>
<dbReference type="NCBIfam" id="TIGR00244">
    <property type="entry name" value="transcriptional regulator NrdR"/>
    <property type="match status" value="1"/>
</dbReference>
<dbReference type="PANTHER" id="PTHR30455">
    <property type="entry name" value="TRANSCRIPTIONAL REPRESSOR NRDR"/>
    <property type="match status" value="1"/>
</dbReference>
<dbReference type="PANTHER" id="PTHR30455:SF2">
    <property type="entry name" value="TRANSCRIPTIONAL REPRESSOR NRDR"/>
    <property type="match status" value="1"/>
</dbReference>
<dbReference type="Pfam" id="PF03477">
    <property type="entry name" value="ATP-cone"/>
    <property type="match status" value="1"/>
</dbReference>
<dbReference type="Pfam" id="PF22811">
    <property type="entry name" value="Zn_ribbon_NrdR"/>
    <property type="match status" value="1"/>
</dbReference>
<dbReference type="PROSITE" id="PS51161">
    <property type="entry name" value="ATP_CONE"/>
    <property type="match status" value="1"/>
</dbReference>
<proteinExistence type="inferred from homology"/>
<gene>
    <name evidence="1" type="primary">nrdR</name>
    <name type="ordered locus">LHK_00731</name>
</gene>
<name>NRDR_LARHH</name>
<reference key="1">
    <citation type="journal article" date="2009" name="PLoS Genet.">
        <title>The complete genome and proteome of Laribacter hongkongensis reveal potential mechanisms for adaptations to different temperatures and habitats.</title>
        <authorList>
            <person name="Woo P.C.Y."/>
            <person name="Lau S.K.P."/>
            <person name="Tse H."/>
            <person name="Teng J.L.L."/>
            <person name="Curreem S.O."/>
            <person name="Tsang A.K.L."/>
            <person name="Fan R.Y.Y."/>
            <person name="Wong G.K.M."/>
            <person name="Huang Y."/>
            <person name="Loman N.J."/>
            <person name="Snyder L.A.S."/>
            <person name="Cai J.J."/>
            <person name="Huang J.-D."/>
            <person name="Mak W."/>
            <person name="Pallen M.J."/>
            <person name="Lok S."/>
            <person name="Yuen K.-Y."/>
        </authorList>
    </citation>
    <scope>NUCLEOTIDE SEQUENCE [LARGE SCALE GENOMIC DNA]</scope>
    <source>
        <strain>HLHK9</strain>
    </source>
</reference>
<sequence>MKCPFCGHADTQVVDSRVSEDGASIRRRRRCLECDKRFTTFETAEVRMPQVVKQDGHRAEFSDAKLRTGFTRALHKRPVPTPLVDEAVGRVKQKLLQLGEREVSARQIGEMVMSELARLDKVAYVRFASVYRSFQDVAEFSDAIREITHDKD</sequence>
<keyword id="KW-0067">ATP-binding</keyword>
<keyword id="KW-0238">DNA-binding</keyword>
<keyword id="KW-0479">Metal-binding</keyword>
<keyword id="KW-0547">Nucleotide-binding</keyword>
<keyword id="KW-1185">Reference proteome</keyword>
<keyword id="KW-0678">Repressor</keyword>
<keyword id="KW-0804">Transcription</keyword>
<keyword id="KW-0805">Transcription regulation</keyword>
<keyword id="KW-0862">Zinc</keyword>
<keyword id="KW-0863">Zinc-finger</keyword>
<protein>
    <recommendedName>
        <fullName evidence="1">Transcriptional repressor NrdR</fullName>
    </recommendedName>
</protein>
<comment type="function">
    <text evidence="1">Negatively regulates transcription of bacterial ribonucleotide reductase nrd genes and operons by binding to NrdR-boxes.</text>
</comment>
<comment type="cofactor">
    <cofactor evidence="1">
        <name>Zn(2+)</name>
        <dbReference type="ChEBI" id="CHEBI:29105"/>
    </cofactor>
    <text evidence="1">Binds 1 zinc ion.</text>
</comment>
<comment type="similarity">
    <text evidence="1">Belongs to the NrdR family.</text>
</comment>
<accession>C1D4D0</accession>
<evidence type="ECO:0000255" key="1">
    <source>
        <dbReference type="HAMAP-Rule" id="MF_00440"/>
    </source>
</evidence>
<organism>
    <name type="scientific">Laribacter hongkongensis (strain HLHK9)</name>
    <dbReference type="NCBI Taxonomy" id="557598"/>
    <lineage>
        <taxon>Bacteria</taxon>
        <taxon>Pseudomonadati</taxon>
        <taxon>Pseudomonadota</taxon>
        <taxon>Betaproteobacteria</taxon>
        <taxon>Neisseriales</taxon>
        <taxon>Aquaspirillaceae</taxon>
        <taxon>Laribacter</taxon>
    </lineage>
</organism>
<feature type="chain" id="PRO_1000191801" description="Transcriptional repressor NrdR">
    <location>
        <begin position="1"/>
        <end position="152"/>
    </location>
</feature>
<feature type="domain" description="ATP-cone" evidence="1">
    <location>
        <begin position="49"/>
        <end position="139"/>
    </location>
</feature>
<feature type="zinc finger region" evidence="1">
    <location>
        <begin position="3"/>
        <end position="34"/>
    </location>
</feature>